<evidence type="ECO:0000255" key="1">
    <source>
        <dbReference type="HAMAP-Rule" id="MF_01367"/>
    </source>
</evidence>
<evidence type="ECO:0000305" key="2"/>
<gene>
    <name evidence="1" type="primary">rplN</name>
    <name type="ordered locus">MW2159</name>
</gene>
<proteinExistence type="evidence at protein level"/>
<comment type="function">
    <text evidence="1">Binds to 23S rRNA. Forms part of two intersubunit bridges in the 70S ribosome.</text>
</comment>
<comment type="subunit">
    <text evidence="1">Part of the 50S ribosomal subunit. Forms a cluster with proteins L3 and L19. In the 70S ribosome, L14 and L19 interact and together make contacts with the 16S rRNA in bridges B5 and B8.</text>
</comment>
<comment type="similarity">
    <text evidence="1">Belongs to the universal ribosomal protein uL14 family.</text>
</comment>
<feature type="chain" id="PRO_0000224017" description="Large ribosomal subunit protein uL14">
    <location>
        <begin position="1"/>
        <end position="122"/>
    </location>
</feature>
<keyword id="KW-0002">3D-structure</keyword>
<keyword id="KW-0687">Ribonucleoprotein</keyword>
<keyword id="KW-0689">Ribosomal protein</keyword>
<keyword id="KW-0694">RNA-binding</keyword>
<keyword id="KW-0699">rRNA-binding</keyword>
<dbReference type="EMBL" id="BA000033">
    <property type="protein sequence ID" value="BAB96024.1"/>
    <property type="molecule type" value="Genomic_DNA"/>
</dbReference>
<dbReference type="RefSeq" id="WP_000615921.1">
    <property type="nucleotide sequence ID" value="NC_003923.1"/>
</dbReference>
<dbReference type="PDB" id="8Y36">
    <property type="method" value="EM"/>
    <property type="resolution" value="2.65 A"/>
    <property type="chains" value="I=1-122"/>
</dbReference>
<dbReference type="PDB" id="8Y37">
    <property type="method" value="EM"/>
    <property type="resolution" value="2.53 A"/>
    <property type="chains" value="I=1-122"/>
</dbReference>
<dbReference type="PDB" id="8Y38">
    <property type="method" value="EM"/>
    <property type="resolution" value="2.58 A"/>
    <property type="chains" value="I=1-122"/>
</dbReference>
<dbReference type="PDB" id="8Y39">
    <property type="method" value="EM"/>
    <property type="resolution" value="3.60 A"/>
    <property type="chains" value="I=1-122"/>
</dbReference>
<dbReference type="PDBsum" id="8Y36"/>
<dbReference type="PDBsum" id="8Y37"/>
<dbReference type="PDBsum" id="8Y38"/>
<dbReference type="PDBsum" id="8Y39"/>
<dbReference type="EMDB" id="EMD-38873"/>
<dbReference type="EMDB" id="EMD-38874"/>
<dbReference type="EMDB" id="EMD-38875"/>
<dbReference type="EMDB" id="EMD-38876"/>
<dbReference type="SMR" id="Q7A081"/>
<dbReference type="GeneID" id="98346552"/>
<dbReference type="KEGG" id="sam:MW2159"/>
<dbReference type="HOGENOM" id="CLU_095071_2_1_9"/>
<dbReference type="GO" id="GO:0022625">
    <property type="term" value="C:cytosolic large ribosomal subunit"/>
    <property type="evidence" value="ECO:0007669"/>
    <property type="project" value="TreeGrafter"/>
</dbReference>
<dbReference type="GO" id="GO:0070180">
    <property type="term" value="F:large ribosomal subunit rRNA binding"/>
    <property type="evidence" value="ECO:0007669"/>
    <property type="project" value="TreeGrafter"/>
</dbReference>
<dbReference type="GO" id="GO:0003735">
    <property type="term" value="F:structural constituent of ribosome"/>
    <property type="evidence" value="ECO:0007669"/>
    <property type="project" value="InterPro"/>
</dbReference>
<dbReference type="GO" id="GO:0006412">
    <property type="term" value="P:translation"/>
    <property type="evidence" value="ECO:0007669"/>
    <property type="project" value="UniProtKB-UniRule"/>
</dbReference>
<dbReference type="CDD" id="cd00337">
    <property type="entry name" value="Ribosomal_uL14"/>
    <property type="match status" value="1"/>
</dbReference>
<dbReference type="FunFam" id="2.40.150.20:FF:000001">
    <property type="entry name" value="50S ribosomal protein L14"/>
    <property type="match status" value="1"/>
</dbReference>
<dbReference type="Gene3D" id="2.40.150.20">
    <property type="entry name" value="Ribosomal protein L14"/>
    <property type="match status" value="1"/>
</dbReference>
<dbReference type="HAMAP" id="MF_01367">
    <property type="entry name" value="Ribosomal_uL14"/>
    <property type="match status" value="1"/>
</dbReference>
<dbReference type="InterPro" id="IPR000218">
    <property type="entry name" value="Ribosomal_uL14"/>
</dbReference>
<dbReference type="InterPro" id="IPR005745">
    <property type="entry name" value="Ribosomal_uL14_bac-type"/>
</dbReference>
<dbReference type="InterPro" id="IPR019972">
    <property type="entry name" value="Ribosomal_uL14_CS"/>
</dbReference>
<dbReference type="InterPro" id="IPR036853">
    <property type="entry name" value="Ribosomal_uL14_sf"/>
</dbReference>
<dbReference type="NCBIfam" id="TIGR01067">
    <property type="entry name" value="rplN_bact"/>
    <property type="match status" value="1"/>
</dbReference>
<dbReference type="PANTHER" id="PTHR11761">
    <property type="entry name" value="50S/60S RIBOSOMAL PROTEIN L14/L23"/>
    <property type="match status" value="1"/>
</dbReference>
<dbReference type="PANTHER" id="PTHR11761:SF3">
    <property type="entry name" value="LARGE RIBOSOMAL SUBUNIT PROTEIN UL14M"/>
    <property type="match status" value="1"/>
</dbReference>
<dbReference type="Pfam" id="PF00238">
    <property type="entry name" value="Ribosomal_L14"/>
    <property type="match status" value="1"/>
</dbReference>
<dbReference type="SMART" id="SM01374">
    <property type="entry name" value="Ribosomal_L14"/>
    <property type="match status" value="1"/>
</dbReference>
<dbReference type="SUPFAM" id="SSF50193">
    <property type="entry name" value="Ribosomal protein L14"/>
    <property type="match status" value="1"/>
</dbReference>
<dbReference type="PROSITE" id="PS00049">
    <property type="entry name" value="RIBOSOMAL_L14"/>
    <property type="match status" value="1"/>
</dbReference>
<accession>Q7A081</accession>
<name>RL14_STAAW</name>
<sequence>MIQQETRLKVADNSGAREVLTIKVLGGSGRKTANIGDVIVCTVKNATPGGVVKKGDVVKAVIVRTKSGVRRNDGSYIKFDENACVIIRDDKGPRGTRIFGPVARELREGNFMKIVSLAPEVL</sequence>
<protein>
    <recommendedName>
        <fullName evidence="1">Large ribosomal subunit protein uL14</fullName>
    </recommendedName>
    <alternativeName>
        <fullName evidence="2">50S ribosomal protein L14</fullName>
    </alternativeName>
</protein>
<reference key="1">
    <citation type="journal article" date="2002" name="Lancet">
        <title>Genome and virulence determinants of high virulence community-acquired MRSA.</title>
        <authorList>
            <person name="Baba T."/>
            <person name="Takeuchi F."/>
            <person name="Kuroda M."/>
            <person name="Yuzawa H."/>
            <person name="Aoki K."/>
            <person name="Oguchi A."/>
            <person name="Nagai Y."/>
            <person name="Iwama N."/>
            <person name="Asano K."/>
            <person name="Naimi T."/>
            <person name="Kuroda H."/>
            <person name="Cui L."/>
            <person name="Yamamoto K."/>
            <person name="Hiramatsu K."/>
        </authorList>
    </citation>
    <scope>NUCLEOTIDE SEQUENCE [LARGE SCALE GENOMIC DNA]</scope>
    <source>
        <strain>MW2</strain>
    </source>
</reference>
<organism>
    <name type="scientific">Staphylococcus aureus (strain MW2)</name>
    <dbReference type="NCBI Taxonomy" id="196620"/>
    <lineage>
        <taxon>Bacteria</taxon>
        <taxon>Bacillati</taxon>
        <taxon>Bacillota</taxon>
        <taxon>Bacilli</taxon>
        <taxon>Bacillales</taxon>
        <taxon>Staphylococcaceae</taxon>
        <taxon>Staphylococcus</taxon>
    </lineage>
</organism>